<proteinExistence type="inferred from homology"/>
<gene>
    <name evidence="1" type="primary">rplW</name>
    <name type="ordered locus">HPAG1_1262</name>
</gene>
<sequence length="93" mass="10454">MADIMDIKSILYTEKSLGLQEKGVLVVQTAQNVTKNQLKEVFKTYFGFEPLKINSLKQEGKVKRFRGKLGQRKSFKKFYVKVPEGASIAALGA</sequence>
<feature type="chain" id="PRO_1000068086" description="Large ribosomal subunit protein uL23">
    <location>
        <begin position="1"/>
        <end position="93"/>
    </location>
</feature>
<protein>
    <recommendedName>
        <fullName evidence="1">Large ribosomal subunit protein uL23</fullName>
    </recommendedName>
    <alternativeName>
        <fullName evidence="2">50S ribosomal protein L23</fullName>
    </alternativeName>
</protein>
<name>RL23_HELPH</name>
<comment type="function">
    <text evidence="1">One of the early assembly proteins it binds 23S rRNA. One of the proteins that surrounds the polypeptide exit tunnel on the outside of the ribosome. Forms the main docking site for trigger factor binding to the ribosome.</text>
</comment>
<comment type="subunit">
    <text evidence="1">Part of the 50S ribosomal subunit. Contacts protein L29, and trigger factor when it is bound to the ribosome.</text>
</comment>
<comment type="similarity">
    <text evidence="1">Belongs to the universal ribosomal protein uL23 family.</text>
</comment>
<reference key="1">
    <citation type="journal article" date="2006" name="Proc. Natl. Acad. Sci. U.S.A.">
        <title>The complete genome sequence of a chronic atrophic gastritis Helicobacter pylori strain: evolution during disease progression.</title>
        <authorList>
            <person name="Oh J.D."/>
            <person name="Kling-Baeckhed H."/>
            <person name="Giannakis M."/>
            <person name="Xu J."/>
            <person name="Fulton R.S."/>
            <person name="Fulton L.A."/>
            <person name="Cordum H.S."/>
            <person name="Wang C."/>
            <person name="Elliott G."/>
            <person name="Edwards J."/>
            <person name="Mardis E.R."/>
            <person name="Engstrand L.G."/>
            <person name="Gordon J.I."/>
        </authorList>
    </citation>
    <scope>NUCLEOTIDE SEQUENCE [LARGE SCALE GENOMIC DNA]</scope>
    <source>
        <strain>HPAG1</strain>
    </source>
</reference>
<keyword id="KW-0687">Ribonucleoprotein</keyword>
<keyword id="KW-0689">Ribosomal protein</keyword>
<keyword id="KW-0694">RNA-binding</keyword>
<keyword id="KW-0699">rRNA-binding</keyword>
<evidence type="ECO:0000255" key="1">
    <source>
        <dbReference type="HAMAP-Rule" id="MF_01369"/>
    </source>
</evidence>
<evidence type="ECO:0000305" key="2"/>
<accession>Q1CRU3</accession>
<organism>
    <name type="scientific">Helicobacter pylori (strain HPAG1)</name>
    <dbReference type="NCBI Taxonomy" id="357544"/>
    <lineage>
        <taxon>Bacteria</taxon>
        <taxon>Pseudomonadati</taxon>
        <taxon>Campylobacterota</taxon>
        <taxon>Epsilonproteobacteria</taxon>
        <taxon>Campylobacterales</taxon>
        <taxon>Helicobacteraceae</taxon>
        <taxon>Helicobacter</taxon>
    </lineage>
</organism>
<dbReference type="EMBL" id="CP000241">
    <property type="protein sequence ID" value="ABF85329.1"/>
    <property type="molecule type" value="Genomic_DNA"/>
</dbReference>
<dbReference type="RefSeq" id="WP_000763613.1">
    <property type="nucleotide sequence ID" value="NC_008086.1"/>
</dbReference>
<dbReference type="SMR" id="Q1CRU3"/>
<dbReference type="KEGG" id="hpa:HPAG1_1262"/>
<dbReference type="HOGENOM" id="CLU_037562_3_1_7"/>
<dbReference type="GO" id="GO:1990904">
    <property type="term" value="C:ribonucleoprotein complex"/>
    <property type="evidence" value="ECO:0007669"/>
    <property type="project" value="UniProtKB-KW"/>
</dbReference>
<dbReference type="GO" id="GO:0005840">
    <property type="term" value="C:ribosome"/>
    <property type="evidence" value="ECO:0007669"/>
    <property type="project" value="UniProtKB-KW"/>
</dbReference>
<dbReference type="GO" id="GO:0019843">
    <property type="term" value="F:rRNA binding"/>
    <property type="evidence" value="ECO:0007669"/>
    <property type="project" value="UniProtKB-UniRule"/>
</dbReference>
<dbReference type="GO" id="GO:0003735">
    <property type="term" value="F:structural constituent of ribosome"/>
    <property type="evidence" value="ECO:0007669"/>
    <property type="project" value="InterPro"/>
</dbReference>
<dbReference type="GO" id="GO:0006412">
    <property type="term" value="P:translation"/>
    <property type="evidence" value="ECO:0007669"/>
    <property type="project" value="UniProtKB-UniRule"/>
</dbReference>
<dbReference type="Gene3D" id="3.30.70.330">
    <property type="match status" value="1"/>
</dbReference>
<dbReference type="HAMAP" id="MF_01369_B">
    <property type="entry name" value="Ribosomal_uL23_B"/>
    <property type="match status" value="1"/>
</dbReference>
<dbReference type="InterPro" id="IPR012677">
    <property type="entry name" value="Nucleotide-bd_a/b_plait_sf"/>
</dbReference>
<dbReference type="InterPro" id="IPR013025">
    <property type="entry name" value="Ribosomal_uL23-like"/>
</dbReference>
<dbReference type="InterPro" id="IPR012678">
    <property type="entry name" value="Ribosomal_uL23/eL15/eS24_sf"/>
</dbReference>
<dbReference type="NCBIfam" id="NF004362">
    <property type="entry name" value="PRK05738.2-2"/>
    <property type="match status" value="1"/>
</dbReference>
<dbReference type="Pfam" id="PF00276">
    <property type="entry name" value="Ribosomal_L23"/>
    <property type="match status" value="1"/>
</dbReference>
<dbReference type="SUPFAM" id="SSF54189">
    <property type="entry name" value="Ribosomal proteins S24e, L23 and L15e"/>
    <property type="match status" value="1"/>
</dbReference>